<evidence type="ECO:0000255" key="1">
    <source>
        <dbReference type="HAMAP-Rule" id="MF_00443"/>
    </source>
</evidence>
<organism>
    <name type="scientific">Chromobacterium violaceum (strain ATCC 12472 / DSM 30191 / JCM 1249 / CCUG 213 / NBRC 12614 / NCIMB 9131 / NCTC 9757 / MK)</name>
    <dbReference type="NCBI Taxonomy" id="243365"/>
    <lineage>
        <taxon>Bacteria</taxon>
        <taxon>Pseudomonadati</taxon>
        <taxon>Pseudomonadota</taxon>
        <taxon>Betaproteobacteria</taxon>
        <taxon>Neisseriales</taxon>
        <taxon>Chromobacteriaceae</taxon>
        <taxon>Chromobacterium</taxon>
    </lineage>
</organism>
<gene>
    <name evidence="1" type="primary">thiG</name>
    <name type="ordered locus">CV_3766</name>
</gene>
<comment type="function">
    <text evidence="1">Catalyzes the rearrangement of 1-deoxy-D-xylulose 5-phosphate (DXP) to produce the thiazole phosphate moiety of thiamine. Sulfur is provided by the thiocarboxylate moiety of the carrier protein ThiS. In vitro, sulfur can be provided by H(2)S.</text>
</comment>
<comment type="catalytic activity">
    <reaction evidence="1">
        <text>[ThiS sulfur-carrier protein]-C-terminal-Gly-aminoethanethioate + 2-iminoacetate + 1-deoxy-D-xylulose 5-phosphate = [ThiS sulfur-carrier protein]-C-terminal Gly-Gly + 2-[(2R,5Z)-2-carboxy-4-methylthiazol-5(2H)-ylidene]ethyl phosphate + 2 H2O + H(+)</text>
        <dbReference type="Rhea" id="RHEA:26297"/>
        <dbReference type="Rhea" id="RHEA-COMP:12909"/>
        <dbReference type="Rhea" id="RHEA-COMP:19908"/>
        <dbReference type="ChEBI" id="CHEBI:15377"/>
        <dbReference type="ChEBI" id="CHEBI:15378"/>
        <dbReference type="ChEBI" id="CHEBI:57792"/>
        <dbReference type="ChEBI" id="CHEBI:62899"/>
        <dbReference type="ChEBI" id="CHEBI:77846"/>
        <dbReference type="ChEBI" id="CHEBI:90778"/>
        <dbReference type="ChEBI" id="CHEBI:232372"/>
        <dbReference type="EC" id="2.8.1.10"/>
    </reaction>
</comment>
<comment type="pathway">
    <text evidence="1">Cofactor biosynthesis; thiamine diphosphate biosynthesis.</text>
</comment>
<comment type="subunit">
    <text evidence="1">Homotetramer. Forms heterodimers with either ThiH or ThiS.</text>
</comment>
<comment type="subcellular location">
    <subcellularLocation>
        <location evidence="1">Cytoplasm</location>
    </subcellularLocation>
</comment>
<comment type="similarity">
    <text evidence="1">Belongs to the ThiG family.</text>
</comment>
<name>THIG_CHRVO</name>
<feature type="chain" id="PRO_0000162805" description="Thiazole synthase">
    <location>
        <begin position="1"/>
        <end position="264"/>
    </location>
</feature>
<feature type="active site" description="Schiff-base intermediate with DXP" evidence="1">
    <location>
        <position position="101"/>
    </location>
</feature>
<feature type="binding site" evidence="1">
    <location>
        <position position="162"/>
    </location>
    <ligand>
        <name>1-deoxy-D-xylulose 5-phosphate</name>
        <dbReference type="ChEBI" id="CHEBI:57792"/>
    </ligand>
</feature>
<feature type="binding site" evidence="1">
    <location>
        <begin position="188"/>
        <end position="189"/>
    </location>
    <ligand>
        <name>1-deoxy-D-xylulose 5-phosphate</name>
        <dbReference type="ChEBI" id="CHEBI:57792"/>
    </ligand>
</feature>
<feature type="binding site" evidence="1">
    <location>
        <begin position="210"/>
        <end position="211"/>
    </location>
    <ligand>
        <name>1-deoxy-D-xylulose 5-phosphate</name>
        <dbReference type="ChEBI" id="CHEBI:57792"/>
    </ligand>
</feature>
<reference key="1">
    <citation type="journal article" date="2003" name="Proc. Natl. Acad. Sci. U.S.A.">
        <title>The complete genome sequence of Chromobacterium violaceum reveals remarkable and exploitable bacterial adaptability.</title>
        <authorList>
            <person name="Vasconcelos A.T.R."/>
            <person name="de Almeida D.F."/>
            <person name="Hungria M."/>
            <person name="Guimaraes C.T."/>
            <person name="Antonio R.V."/>
            <person name="Almeida F.C."/>
            <person name="de Almeida L.G.P."/>
            <person name="de Almeida R."/>
            <person name="Alves-Gomes J.A."/>
            <person name="Andrade E.M."/>
            <person name="Araripe J."/>
            <person name="de Araujo M.F.F."/>
            <person name="Astolfi-Filho S."/>
            <person name="Azevedo V."/>
            <person name="Baptista A.J."/>
            <person name="Bataus L.A.M."/>
            <person name="Batista J.S."/>
            <person name="Belo A."/>
            <person name="van den Berg C."/>
            <person name="Bogo M."/>
            <person name="Bonatto S."/>
            <person name="Bordignon J."/>
            <person name="Brigido M.M."/>
            <person name="Brito C.A."/>
            <person name="Brocchi M."/>
            <person name="Burity H.A."/>
            <person name="Camargo A.A."/>
            <person name="Cardoso D.D.P."/>
            <person name="Carneiro N.P."/>
            <person name="Carraro D.M."/>
            <person name="Carvalho C.M.B."/>
            <person name="Cascardo J.C.M."/>
            <person name="Cavada B.S."/>
            <person name="Chueire L.M.O."/>
            <person name="Creczynski-Pasa T.B."/>
            <person name="Cunha-Junior N.C."/>
            <person name="Fagundes N."/>
            <person name="Falcao C.L."/>
            <person name="Fantinatti F."/>
            <person name="Farias I.P."/>
            <person name="Felipe M.S.S."/>
            <person name="Ferrari L.P."/>
            <person name="Ferro J.A."/>
            <person name="Ferro M.I.T."/>
            <person name="Franco G.R."/>
            <person name="Freitas N.S.A."/>
            <person name="Furlan L.R."/>
            <person name="Gazzinelli R.T."/>
            <person name="Gomes E.A."/>
            <person name="Goncalves P.R."/>
            <person name="Grangeiro T.B."/>
            <person name="Grattapaglia D."/>
            <person name="Grisard E.C."/>
            <person name="Hanna E.S."/>
            <person name="Jardim S.N."/>
            <person name="Laurino J."/>
            <person name="Leoi L.C.T."/>
            <person name="Lima L.F.A."/>
            <person name="Loureiro M.F."/>
            <person name="Lyra M.C.C.P."/>
            <person name="Madeira H.M.F."/>
            <person name="Manfio G.P."/>
            <person name="Maranhao A.Q."/>
            <person name="Martins W.S."/>
            <person name="di Mauro S.M.Z."/>
            <person name="de Medeiros S.R.B."/>
            <person name="Meissner R.V."/>
            <person name="Moreira M.A.M."/>
            <person name="Nascimento F.F."/>
            <person name="Nicolas M.F."/>
            <person name="Oliveira J.G."/>
            <person name="Oliveira S.C."/>
            <person name="Paixao R.F.C."/>
            <person name="Parente J.A."/>
            <person name="Pedrosa F.O."/>
            <person name="Pena S.D.J."/>
            <person name="Pereira J.O."/>
            <person name="Pereira M."/>
            <person name="Pinto L.S.R.C."/>
            <person name="Pinto L.S."/>
            <person name="Porto J.I.R."/>
            <person name="Potrich D.P."/>
            <person name="Ramalho-Neto C.E."/>
            <person name="Reis A.M.M."/>
            <person name="Rigo L.U."/>
            <person name="Rondinelli E."/>
            <person name="Santos E.B.P."/>
            <person name="Santos F.R."/>
            <person name="Schneider M.P.C."/>
            <person name="Seuanez H.N."/>
            <person name="Silva A.M.R."/>
            <person name="da Silva A.L.C."/>
            <person name="Silva D.W."/>
            <person name="Silva R."/>
            <person name="Simoes I.C."/>
            <person name="Simon D."/>
            <person name="Soares C.M.A."/>
            <person name="Soares R.B.A."/>
            <person name="Souza E.M."/>
            <person name="Souza K.R.L."/>
            <person name="Souza R.C."/>
            <person name="Steffens M.B.R."/>
            <person name="Steindel M."/>
            <person name="Teixeira S.R."/>
            <person name="Urmenyi T."/>
            <person name="Vettore A."/>
            <person name="Wassem R."/>
            <person name="Zaha A."/>
            <person name="Simpson A.J.G."/>
        </authorList>
    </citation>
    <scope>NUCLEOTIDE SEQUENCE [LARGE SCALE GENOMIC DNA]</scope>
    <source>
        <strain>ATCC 12472 / DSM 30191 / JCM 1249 / CCUG 213 / NBRC 12614 / NCIMB 9131 / NCTC 9757 / MK</strain>
    </source>
</reference>
<accession>Q7NRL4</accession>
<keyword id="KW-0963">Cytoplasm</keyword>
<keyword id="KW-1185">Reference proteome</keyword>
<keyword id="KW-0704">Schiff base</keyword>
<keyword id="KW-0784">Thiamine biosynthesis</keyword>
<keyword id="KW-0808">Transferase</keyword>
<protein>
    <recommendedName>
        <fullName evidence="1">Thiazole synthase</fullName>
        <ecNumber evidence="1">2.8.1.10</ecNumber>
    </recommendedName>
</protein>
<proteinExistence type="inferred from homology"/>
<dbReference type="EC" id="2.8.1.10" evidence="1"/>
<dbReference type="EMBL" id="AE016825">
    <property type="protein sequence ID" value="AAQ61428.2"/>
    <property type="molecule type" value="Genomic_DNA"/>
</dbReference>
<dbReference type="SMR" id="Q7NRL4"/>
<dbReference type="STRING" id="243365.CV_3766"/>
<dbReference type="KEGG" id="cvi:CV_3766"/>
<dbReference type="eggNOG" id="COG2022">
    <property type="taxonomic scope" value="Bacteria"/>
</dbReference>
<dbReference type="HOGENOM" id="CLU_062233_1_1_4"/>
<dbReference type="UniPathway" id="UPA00060"/>
<dbReference type="Proteomes" id="UP000001424">
    <property type="component" value="Chromosome"/>
</dbReference>
<dbReference type="GO" id="GO:0005737">
    <property type="term" value="C:cytoplasm"/>
    <property type="evidence" value="ECO:0007669"/>
    <property type="project" value="UniProtKB-SubCell"/>
</dbReference>
<dbReference type="GO" id="GO:1990107">
    <property type="term" value="F:thiazole synthase activity"/>
    <property type="evidence" value="ECO:0007669"/>
    <property type="project" value="UniProtKB-EC"/>
</dbReference>
<dbReference type="GO" id="GO:0009229">
    <property type="term" value="P:thiamine diphosphate biosynthetic process"/>
    <property type="evidence" value="ECO:0007669"/>
    <property type="project" value="UniProtKB-UniRule"/>
</dbReference>
<dbReference type="CDD" id="cd04728">
    <property type="entry name" value="ThiG"/>
    <property type="match status" value="1"/>
</dbReference>
<dbReference type="Gene3D" id="3.20.20.70">
    <property type="entry name" value="Aldolase class I"/>
    <property type="match status" value="1"/>
</dbReference>
<dbReference type="HAMAP" id="MF_00443">
    <property type="entry name" value="ThiG"/>
    <property type="match status" value="1"/>
</dbReference>
<dbReference type="InterPro" id="IPR013785">
    <property type="entry name" value="Aldolase_TIM"/>
</dbReference>
<dbReference type="InterPro" id="IPR033983">
    <property type="entry name" value="Thiazole_synthase_ThiG"/>
</dbReference>
<dbReference type="InterPro" id="IPR008867">
    <property type="entry name" value="ThiG"/>
</dbReference>
<dbReference type="PANTHER" id="PTHR34266">
    <property type="entry name" value="THIAZOLE SYNTHASE"/>
    <property type="match status" value="1"/>
</dbReference>
<dbReference type="PANTHER" id="PTHR34266:SF2">
    <property type="entry name" value="THIAZOLE SYNTHASE"/>
    <property type="match status" value="1"/>
</dbReference>
<dbReference type="Pfam" id="PF05690">
    <property type="entry name" value="ThiG"/>
    <property type="match status" value="1"/>
</dbReference>
<dbReference type="SUPFAM" id="SSF110399">
    <property type="entry name" value="ThiG-like"/>
    <property type="match status" value="1"/>
</dbReference>
<sequence length="264" mass="28304">MDDKLVIAGREYGSRLLVGTGKYKDFEQTAAALDVSGTEIVTAAIRRVNLGQNANEPNLLDFLPKNRYNLLPNTAGCYSAEDAIRTLRLARELLDDHRFVKLEVLGDPNNLYPNVRETLKAAEVLVAEGFDVLVYTSDDPIVARELEQIGCCAIMPLASLIGSGMGILNPWNLQLIIEQSKVPVIVDAGVGTASDAAIAMELGCDGVLMNTAIAAARDPVRMAHAMKLAVEAGRAAYLAGRMPKRFYSAVPSSPSEGVISSVKS</sequence>